<feature type="chain" id="PRO_0000046519" description="DNA polymerase catalytic subunit">
    <location>
        <begin position="1"/>
        <end position="1220"/>
    </location>
</feature>
<feature type="region of interest" description="Disordered" evidence="2">
    <location>
        <begin position="21"/>
        <end position="43"/>
    </location>
</feature>
<feature type="region of interest" description="Disordered" evidence="2">
    <location>
        <begin position="641"/>
        <end position="691"/>
    </location>
</feature>
<feature type="compositionally biased region" description="Polar residues" evidence="2">
    <location>
        <begin position="646"/>
        <end position="660"/>
    </location>
</feature>
<sequence>MAAREQANSVRRSGFFNPFIGKRPFFRPGSGQTAETERPRPPQHSYCTEVGSFKFIAPRCLDEEAPADQRRGVHVGTLERPPKVYCDGSEYDVLNFASGGCWPRRIRVWNGQDFRGDGFNPRFERFHVYDIVETSESASHDDPSRFAELSRPSGSVVTLLGMSECGKRVAVHVYGVRHYFYMAKAEVDSACGITTEAELVRAMVDCAHSSALSAALGNGNGGKQSGGSGGGWWGGKHVSADCFKVETVCHTTLYYFGSKPALYYRVSASSSRLGGFICDNFHPEITKFEGSVDVTTRLLLDNENFTSFGWYRLRPGTHGERVQLRPVERHVTSSDVEINCTPDNLEPIPDEAAWPDYKLMCFDIECKAGTGNEMAFPVATNQEDLVIQISCLLYSLATQNHEHTLLFSLGSCDISEEYSFACVQRGEPRPTVLEFDSEYELLVAFLTFLKQYSPEFATGYNIVNFDWAYIVNKVTSVYNIKLDGYGKFNKGGLFKVWDIATNHFQKKSKVKINGLISLDMYSVATEKLKLPSYKLDAVVGDVLGEHKIDLPYKEIPSYYAGGPDRRGVIGEYCIQDSRLVGKLFFKYLPHLELSAVAKLARITLTRVIFDGQQIRVYTCLLKLARERNFILPDNRRRFDSQADAASETSELAMDSQSHAFDSTDEPDGVDGTPDAAGSGATSENGGGKPGVGRAVGYQGAKVLDPVSGFHVDPVVVFDFASLYPSIIQAHNLCFTTLALDEVDLAGLQPSVNYSTFEVGDQKLFFVHAHIRESLLGILLRDWLAMRKAVRARIPTSTPEEAVLLDKQQSAIKVICNSVYGFTGVANGLLPCLRIAATVTTIGRDMLLKTRDYVHSRWATRELLEDNFPGAIGFRNHKPYSVRVIYGDTDSVFIKFVGLTYEGVSELGDAMSRQISADLFRAPIKLECEKTFQRLLLITKKKYIGVINGGKMLMKGVDLVRKNNCSFINLYARHLVDLLLYDEDVATAAAKVTDVPPAEWVGRPLPSGFDKFGRVLVEAYNRITAPNLDVREFVMTAELSRSPESYTNKRLPHLTVYFKLAMRNEELPSVKERIPYVIVAQTEAAEREAGVVNSMRGTAQNPVVTKTARPQPKRKLLVSDLAEDPTYVSENDVPLNTDYYFSHLLGTISVTFKALFGNDVRTTENLLKRFIPETPHKTPTKTQALLERAGFEKLTPFTPEEESRRILHTVFCTLEAAPHQS</sequence>
<evidence type="ECO:0000250" key="1"/>
<evidence type="ECO:0000256" key="2">
    <source>
        <dbReference type="SAM" id="MobiDB-lite"/>
    </source>
</evidence>
<evidence type="ECO:0000305" key="3"/>
<protein>
    <recommendedName>
        <fullName>DNA polymerase catalytic subunit</fullName>
        <ecNumber>2.7.7.7</ecNumber>
        <ecNumber>3.1.26.4</ecNumber>
    </recommendedName>
</protein>
<reference key="1">
    <citation type="submission" date="2003-11" db="EMBL/GenBank/DDBJ databases">
        <authorList>
            <person name="Davis-Poynter N."/>
            <person name="Nugent J."/>
            <person name="Birch-Machin I."/>
            <person name="Allen G.P."/>
        </authorList>
    </citation>
    <scope>NUCLEOTIDE SEQUENCE [LARGE SCALE GENOMIC DNA]</scope>
</reference>
<accession>Q6S6P1</accession>
<keyword id="KW-0235">DNA replication</keyword>
<keyword id="KW-0238">DNA-binding</keyword>
<keyword id="KW-0239">DNA-directed DNA polymerase</keyword>
<keyword id="KW-0255">Endonuclease</keyword>
<keyword id="KW-1048">Host nucleus</keyword>
<keyword id="KW-0378">Hydrolase</keyword>
<keyword id="KW-0511">Multifunctional enzyme</keyword>
<keyword id="KW-0540">Nuclease</keyword>
<keyword id="KW-0548">Nucleotidyltransferase</keyword>
<keyword id="KW-0808">Transferase</keyword>
<keyword id="KW-1194">Viral DNA replication</keyword>
<organismHost>
    <name type="scientific">Equus caballus</name>
    <name type="common">Horse</name>
    <dbReference type="NCBI Taxonomy" id="9796"/>
</organismHost>
<proteinExistence type="inferred from homology"/>
<dbReference type="EC" id="2.7.7.7"/>
<dbReference type="EC" id="3.1.26.4"/>
<dbReference type="EMBL" id="AY464052">
    <property type="protein sequence ID" value="AAS45914.1"/>
    <property type="molecule type" value="Genomic_DNA"/>
</dbReference>
<dbReference type="SMR" id="Q6S6P1"/>
<dbReference type="Proteomes" id="UP000008296">
    <property type="component" value="Segment"/>
</dbReference>
<dbReference type="GO" id="GO:0042025">
    <property type="term" value="C:host cell nucleus"/>
    <property type="evidence" value="ECO:0007669"/>
    <property type="project" value="UniProtKB-SubCell"/>
</dbReference>
<dbReference type="GO" id="GO:0003677">
    <property type="term" value="F:DNA binding"/>
    <property type="evidence" value="ECO:0007669"/>
    <property type="project" value="UniProtKB-KW"/>
</dbReference>
<dbReference type="GO" id="GO:0003887">
    <property type="term" value="F:DNA-directed DNA polymerase activity"/>
    <property type="evidence" value="ECO:0007669"/>
    <property type="project" value="UniProtKB-KW"/>
</dbReference>
<dbReference type="GO" id="GO:0000166">
    <property type="term" value="F:nucleotide binding"/>
    <property type="evidence" value="ECO:0007669"/>
    <property type="project" value="InterPro"/>
</dbReference>
<dbReference type="GO" id="GO:0004523">
    <property type="term" value="F:RNA-DNA hybrid ribonuclease activity"/>
    <property type="evidence" value="ECO:0007669"/>
    <property type="project" value="UniProtKB-EC"/>
</dbReference>
<dbReference type="GO" id="GO:0006261">
    <property type="term" value="P:DNA-templated DNA replication"/>
    <property type="evidence" value="ECO:0007669"/>
    <property type="project" value="TreeGrafter"/>
</dbReference>
<dbReference type="GO" id="GO:0039693">
    <property type="term" value="P:viral DNA genome replication"/>
    <property type="evidence" value="ECO:0007669"/>
    <property type="project" value="UniProtKB-KW"/>
</dbReference>
<dbReference type="FunFam" id="1.10.287.690:FF:000006">
    <property type="entry name" value="DNA polymerase"/>
    <property type="match status" value="1"/>
</dbReference>
<dbReference type="FunFam" id="1.10.132.60:FF:000011">
    <property type="entry name" value="DNA polymerase catalytic subunit"/>
    <property type="match status" value="1"/>
</dbReference>
<dbReference type="FunFam" id="3.30.420.10:FF:000260">
    <property type="entry name" value="DNA polymerase catalytic subunit"/>
    <property type="match status" value="1"/>
</dbReference>
<dbReference type="Gene3D" id="1.10.132.60">
    <property type="entry name" value="DNA polymerase family B, C-terminal domain"/>
    <property type="match status" value="1"/>
</dbReference>
<dbReference type="Gene3D" id="1.10.287.690">
    <property type="entry name" value="Helix hairpin bin"/>
    <property type="match status" value="1"/>
</dbReference>
<dbReference type="Gene3D" id="3.90.1600.10">
    <property type="entry name" value="Palm domain of DNA polymerase"/>
    <property type="match status" value="1"/>
</dbReference>
<dbReference type="Gene3D" id="3.30.420.10">
    <property type="entry name" value="Ribonuclease H-like superfamily/Ribonuclease H"/>
    <property type="match status" value="1"/>
</dbReference>
<dbReference type="InterPro" id="IPR006172">
    <property type="entry name" value="DNA-dir_DNA_pol_B"/>
</dbReference>
<dbReference type="InterPro" id="IPR017964">
    <property type="entry name" value="DNA-dir_DNA_pol_B_CS"/>
</dbReference>
<dbReference type="InterPro" id="IPR006133">
    <property type="entry name" value="DNA-dir_DNA_pol_B_exonuc"/>
</dbReference>
<dbReference type="InterPro" id="IPR006134">
    <property type="entry name" value="DNA-dir_DNA_pol_B_multi_dom"/>
</dbReference>
<dbReference type="InterPro" id="IPR043502">
    <property type="entry name" value="DNA/RNA_pol_sf"/>
</dbReference>
<dbReference type="InterPro" id="IPR042087">
    <property type="entry name" value="DNA_pol_B_thumb"/>
</dbReference>
<dbReference type="InterPro" id="IPR023211">
    <property type="entry name" value="DNA_pol_palm_dom_sf"/>
</dbReference>
<dbReference type="InterPro" id="IPR050240">
    <property type="entry name" value="DNA_pol_type-B"/>
</dbReference>
<dbReference type="InterPro" id="IPR012337">
    <property type="entry name" value="RNaseH-like_sf"/>
</dbReference>
<dbReference type="InterPro" id="IPR036397">
    <property type="entry name" value="RNaseH_sf"/>
</dbReference>
<dbReference type="PANTHER" id="PTHR10322">
    <property type="entry name" value="DNA POLYMERASE CATALYTIC SUBUNIT"/>
    <property type="match status" value="1"/>
</dbReference>
<dbReference type="PANTHER" id="PTHR10322:SF23">
    <property type="entry name" value="DNA POLYMERASE DELTA CATALYTIC SUBUNIT"/>
    <property type="match status" value="1"/>
</dbReference>
<dbReference type="Pfam" id="PF00136">
    <property type="entry name" value="DNA_pol_B"/>
    <property type="match status" value="1"/>
</dbReference>
<dbReference type="Pfam" id="PF03104">
    <property type="entry name" value="DNA_pol_B_exo1"/>
    <property type="match status" value="1"/>
</dbReference>
<dbReference type="PRINTS" id="PR00106">
    <property type="entry name" value="DNAPOLB"/>
</dbReference>
<dbReference type="SMART" id="SM00486">
    <property type="entry name" value="POLBc"/>
    <property type="match status" value="1"/>
</dbReference>
<dbReference type="SUPFAM" id="SSF56672">
    <property type="entry name" value="DNA/RNA polymerases"/>
    <property type="match status" value="1"/>
</dbReference>
<dbReference type="SUPFAM" id="SSF53098">
    <property type="entry name" value="Ribonuclease H-like"/>
    <property type="match status" value="1"/>
</dbReference>
<dbReference type="PROSITE" id="PS00116">
    <property type="entry name" value="DNA_POLYMERASE_B"/>
    <property type="match status" value="1"/>
</dbReference>
<comment type="function">
    <text evidence="1">Replicates viral genomic DNA. The replication complex is composed of six viral proteins: the DNA polymerase, processivity factor, primase, primase-associated factor, helicase, and ssDNA-binding protein. Additionally, the polymerase contains an intrinsic ribonuclease H (RNase H) activity that specifically degrades RNA/DNA heteroduplexes or duplex DNA substrates in the 5' to 3' direction. Therefore, it can catalyze the excision of the RNA primers that initiate the synthesis of Okazaki fragments at a replication fork during viral DNA replication (By similarity).</text>
</comment>
<comment type="catalytic activity">
    <reaction>
        <text>DNA(n) + a 2'-deoxyribonucleoside 5'-triphosphate = DNA(n+1) + diphosphate</text>
        <dbReference type="Rhea" id="RHEA:22508"/>
        <dbReference type="Rhea" id="RHEA-COMP:17339"/>
        <dbReference type="Rhea" id="RHEA-COMP:17340"/>
        <dbReference type="ChEBI" id="CHEBI:33019"/>
        <dbReference type="ChEBI" id="CHEBI:61560"/>
        <dbReference type="ChEBI" id="CHEBI:173112"/>
        <dbReference type="EC" id="2.7.7.7"/>
    </reaction>
</comment>
<comment type="catalytic activity">
    <reaction>
        <text>Endonucleolytic cleavage to 5'-phosphomonoester.</text>
        <dbReference type="EC" id="3.1.26.4"/>
    </reaction>
</comment>
<comment type="subunit">
    <text evidence="1">Forms a complex with the ssDNA-binding protein, the DNA polymerase processivity factor, and the alkaline exonuclease. Interacts with the helicase-primase complex composed of the primase, the helicase and the primase-associated factor; this interaction may coordinate leading and lagging strand DNA synthesis at the replication fork (By similarity).</text>
</comment>
<comment type="subcellular location">
    <subcellularLocation>
        <location evidence="1">Host nucleus</location>
    </subcellularLocation>
    <text evidence="1">The protein is present at discrete sites in nuclei, called replication compartments where viral DNA replication occurs.</text>
</comment>
<comment type="similarity">
    <text evidence="3">Belongs to the DNA polymerase type-B family.</text>
</comment>
<gene>
    <name type="ordered locus">30</name>
</gene>
<organism>
    <name type="scientific">Equine herpesvirus 1 (strain V592)</name>
    <name type="common">EHV-1</name>
    <name type="synonym">Equine abortion virus</name>
    <dbReference type="NCBI Taxonomy" id="310273"/>
    <lineage>
        <taxon>Viruses</taxon>
        <taxon>Duplodnaviria</taxon>
        <taxon>Heunggongvirae</taxon>
        <taxon>Peploviricota</taxon>
        <taxon>Herviviricetes</taxon>
        <taxon>Herpesvirales</taxon>
        <taxon>Orthoherpesviridae</taxon>
        <taxon>Alphaherpesvirinae</taxon>
        <taxon>Varicellovirus</taxon>
        <taxon>Varicellovirus equidalpha1</taxon>
        <taxon>Equid alphaherpesvirus 1</taxon>
    </lineage>
</organism>
<name>DPOL_EHV1V</name>